<proteinExistence type="evidence at protein level"/>
<protein>
    <recommendedName>
        <fullName>Lantibiotic 107891</fullName>
    </recommendedName>
</protein>
<organism>
    <name type="scientific">Microbispora sp. (strain 107891)</name>
    <dbReference type="NCBI Taxonomy" id="415003"/>
    <lineage>
        <taxon>Bacteria</taxon>
        <taxon>Bacillati</taxon>
        <taxon>Actinomycetota</taxon>
        <taxon>Actinomycetes</taxon>
        <taxon>Streptosporangiales</taxon>
        <taxon>Streptosporangiaceae</taxon>
        <taxon>Microbispora</taxon>
    </lineage>
</organism>
<reference evidence="3" key="1">
    <citation type="patent" date="2005-02-17" number="WO2005014628">
        <title>Antibiotic 107891, its factors A1 and A2, pharmaceutically acceptable salts and compositions, and use thereof.</title>
        <authorList>
            <person name="Lazzarini A."/>
            <person name="Gastaldo L."/>
            <person name="Candiani G."/>
            <person name="Ciciliato I."/>
            <person name="Losi D."/>
            <person name="Marinelli F."/>
            <person name="Selva E."/>
            <person name="Parenti F."/>
        </authorList>
    </citation>
    <scope>PROTEIN SEQUENCE</scope>
    <scope>FUNCTION</scope>
    <scope>DEHYDRATION AT THR-2 AND SER-5</scope>
    <scope>HYDROXYLATION AT PRO-14</scope>
    <scope>MASS SPECTROMETRY</scope>
</reference>
<evidence type="ECO:0000255" key="1"/>
<evidence type="ECO:0000269" key="2">
    <source ref="1"/>
</evidence>
<evidence type="ECO:0000305" key="3"/>
<comment type="function">
    <text evidence="2 3">Lanthionine-containing peptide antibiotic (lantibiotic) active on Gram-positive bacteria. The bactericidal activity of lantibiotics is based on depolarization of energized bacterial cytoplasmic membranes, initiated by the formation of aqueous transmembrane pores.</text>
</comment>
<comment type="PTM">
    <text evidence="3">Maturation of lantibiotics involves the enzymatic conversion of Thr, and Ser into dehydrated AA and the formation of thioether bonds with cysteine. The C-terminal lanthionine undergoes decarboxylation. This is followed by membrane translocation and cleavage of the modified precursor.</text>
</comment>
<comment type="PTM">
    <text>Occurs in 2 forms, A1 contains 3,4-dihydroxyproline at Pro-14, A2 contains 4-hydroxyproline at Pro-14. The patent report does not provide the stereochemistry of the modified prolines.</text>
</comment>
<comment type="PTM">
    <text>The patent report does not describe whether the 2,3-didehydrobutyrine is the E- or Z-isomer. In several diagrams it is shown as the E-isomer.</text>
</comment>
<comment type="mass spectrometry" mass="1124.0" method="Electrospray" evidence="2">
    <text>The measured mass is that of form A1.</text>
</comment>
<comment type="mass spectrometry" mass="1116.0" method="Electrospray" evidence="2">
    <text>The measured mass is that of form A2.</text>
</comment>
<comment type="similarity">
    <text evidence="1">Belongs to the type A lantibiotic family.</text>
</comment>
<feature type="peptide" id="PRO_0000271410" description="Lantibiotic 107891" evidence="2">
    <location>
        <begin position="1"/>
        <end position="24"/>
    </location>
</feature>
<feature type="modified residue" description="(E)-2,3-didehydrobutyrine" evidence="2">
    <location>
        <position position="2"/>
    </location>
</feature>
<feature type="modified residue" description="6'-chlorotryptophan" evidence="2">
    <location>
        <position position="4"/>
    </location>
</feature>
<feature type="modified residue" description="2,3-didehydroalanine (Ser)" evidence="2">
    <location>
        <position position="5"/>
    </location>
</feature>
<feature type="modified residue" description="3,4-dihydroxyproline; in form A1" evidence="2">
    <location>
        <position position="14"/>
    </location>
</feature>
<feature type="modified residue" description="4-hydroxyproline; in form A2" evidence="2">
    <location>
        <position position="14"/>
    </location>
</feature>
<feature type="cross-link" description="Lanthionine (Ser-Cys)" evidence="2">
    <location>
        <begin position="3"/>
        <end position="7"/>
    </location>
</feature>
<feature type="cross-link" description="Beta-methyllanthionine (Thr-Cys)" evidence="2">
    <location>
        <begin position="8"/>
        <end position="11"/>
    </location>
</feature>
<feature type="cross-link" description="Lanthionine (Ser-Cys)" evidence="2">
    <location>
        <begin position="13"/>
        <end position="20"/>
    </location>
</feature>
<feature type="cross-link" description="Lanthionine (Ser-Cys)" evidence="2">
    <location>
        <begin position="18"/>
        <end position="23"/>
    </location>
</feature>
<feature type="cross-link" description="S-(2-aminovinyl)-D-cysteine (Ser-Cys)" evidence="2">
    <location>
        <begin position="21"/>
        <end position="24"/>
    </location>
</feature>
<keyword id="KW-0002">3D-structure</keyword>
<keyword id="KW-0044">Antibiotic</keyword>
<keyword id="KW-0929">Antimicrobial</keyword>
<keyword id="KW-0078">Bacteriocin</keyword>
<keyword id="KW-0208">D-amino acid</keyword>
<keyword id="KW-0903">Direct protein sequencing</keyword>
<keyword id="KW-0379">Hydroxylation</keyword>
<keyword id="KW-0425">Lantibiotic</keyword>
<keyword id="KW-0883">Thioether bond</keyword>
<accession>P85065</accession>
<dbReference type="PDB" id="2MH5">
    <property type="method" value="NMR"/>
    <property type="chains" value="A=1-23"/>
</dbReference>
<dbReference type="PDBsum" id="2MH5"/>
<dbReference type="SMR" id="P85065"/>
<dbReference type="EvolutionaryTrace" id="P85065"/>
<dbReference type="GO" id="GO:0005102">
    <property type="term" value="F:signaling receptor binding"/>
    <property type="evidence" value="ECO:0007669"/>
    <property type="project" value="UniProtKB-KW"/>
</dbReference>
<dbReference type="GO" id="GO:0042742">
    <property type="term" value="P:defense response to bacterium"/>
    <property type="evidence" value="ECO:0007669"/>
    <property type="project" value="UniProtKB-KW"/>
</dbReference>
<dbReference type="GO" id="GO:0031640">
    <property type="term" value="P:killing of cells of another organism"/>
    <property type="evidence" value="ECO:0007669"/>
    <property type="project" value="UniProtKB-KW"/>
</dbReference>
<sequence length="24" mass="2355">VTSWSLCTPGCTSPGGGSNCSFCC</sequence>
<name>LAN91_MICS0</name>